<accession>Q1JP42</accession>
<reference key="1">
    <citation type="journal article" date="2006" name="Proc. Natl. Acad. Sci. U.S.A.">
        <title>Molecular genetic anatomy of inter- and intraserotype variation in the human bacterial pathogen group A Streptococcus.</title>
        <authorList>
            <person name="Beres S.B."/>
            <person name="Richter E.W."/>
            <person name="Nagiec M.J."/>
            <person name="Sumby P."/>
            <person name="Porcella S.F."/>
            <person name="DeLeo F.R."/>
            <person name="Musser J.M."/>
        </authorList>
    </citation>
    <scope>NUCLEOTIDE SEQUENCE [LARGE SCALE GENOMIC DNA]</scope>
    <source>
        <strain>MGAS9429</strain>
    </source>
</reference>
<keyword id="KW-0227">DNA damage</keyword>
<keyword id="KW-0233">DNA recombination</keyword>
<keyword id="KW-0234">DNA repair</keyword>
<dbReference type="EMBL" id="CP000259">
    <property type="protein sequence ID" value="ABF31207.1"/>
    <property type="molecule type" value="Genomic_DNA"/>
</dbReference>
<dbReference type="RefSeq" id="WP_002986719.1">
    <property type="nucleotide sequence ID" value="NC_008021.1"/>
</dbReference>
<dbReference type="SMR" id="Q1JP42"/>
<dbReference type="GeneID" id="69900002"/>
<dbReference type="KEGG" id="spk:MGAS9429_Spy0019"/>
<dbReference type="HOGENOM" id="CLU_066632_4_0_9"/>
<dbReference type="Proteomes" id="UP000002433">
    <property type="component" value="Chromosome"/>
</dbReference>
<dbReference type="GO" id="GO:0043590">
    <property type="term" value="C:bacterial nucleoid"/>
    <property type="evidence" value="ECO:0007669"/>
    <property type="project" value="TreeGrafter"/>
</dbReference>
<dbReference type="GO" id="GO:0006310">
    <property type="term" value="P:DNA recombination"/>
    <property type="evidence" value="ECO:0007669"/>
    <property type="project" value="UniProtKB-UniRule"/>
</dbReference>
<dbReference type="GO" id="GO:0006302">
    <property type="term" value="P:double-strand break repair"/>
    <property type="evidence" value="ECO:0007669"/>
    <property type="project" value="TreeGrafter"/>
</dbReference>
<dbReference type="Gene3D" id="2.40.50.140">
    <property type="entry name" value="Nucleic acid-binding proteins"/>
    <property type="match status" value="1"/>
</dbReference>
<dbReference type="Gene3D" id="1.20.1440.120">
    <property type="entry name" value="Recombination protein O, C-terminal domain"/>
    <property type="match status" value="1"/>
</dbReference>
<dbReference type="HAMAP" id="MF_00201">
    <property type="entry name" value="RecO"/>
    <property type="match status" value="1"/>
</dbReference>
<dbReference type="InterPro" id="IPR037278">
    <property type="entry name" value="ARFGAP/RecO"/>
</dbReference>
<dbReference type="InterPro" id="IPR022572">
    <property type="entry name" value="DNA_rep/recomb_RecO_N"/>
</dbReference>
<dbReference type="InterPro" id="IPR012340">
    <property type="entry name" value="NA-bd_OB-fold"/>
</dbReference>
<dbReference type="InterPro" id="IPR003717">
    <property type="entry name" value="RecO"/>
</dbReference>
<dbReference type="InterPro" id="IPR042242">
    <property type="entry name" value="RecO_C"/>
</dbReference>
<dbReference type="NCBIfam" id="TIGR00613">
    <property type="entry name" value="reco"/>
    <property type="match status" value="1"/>
</dbReference>
<dbReference type="PANTHER" id="PTHR33991">
    <property type="entry name" value="DNA REPAIR PROTEIN RECO"/>
    <property type="match status" value="1"/>
</dbReference>
<dbReference type="PANTHER" id="PTHR33991:SF1">
    <property type="entry name" value="DNA REPAIR PROTEIN RECO"/>
    <property type="match status" value="1"/>
</dbReference>
<dbReference type="Pfam" id="PF02565">
    <property type="entry name" value="RecO_C"/>
    <property type="match status" value="1"/>
</dbReference>
<dbReference type="Pfam" id="PF11967">
    <property type="entry name" value="RecO_N"/>
    <property type="match status" value="1"/>
</dbReference>
<dbReference type="SUPFAM" id="SSF57863">
    <property type="entry name" value="ArfGap/RecO-like zinc finger"/>
    <property type="match status" value="1"/>
</dbReference>
<dbReference type="SUPFAM" id="SSF50249">
    <property type="entry name" value="Nucleic acid-binding proteins"/>
    <property type="match status" value="1"/>
</dbReference>
<proteinExistence type="inferred from homology"/>
<evidence type="ECO:0000255" key="1">
    <source>
        <dbReference type="HAMAP-Rule" id="MF_00201"/>
    </source>
</evidence>
<organism>
    <name type="scientific">Streptococcus pyogenes serotype M12 (strain MGAS9429)</name>
    <dbReference type="NCBI Taxonomy" id="370551"/>
    <lineage>
        <taxon>Bacteria</taxon>
        <taxon>Bacillati</taxon>
        <taxon>Bacillota</taxon>
        <taxon>Bacilli</taxon>
        <taxon>Lactobacillales</taxon>
        <taxon>Streptococcaceae</taxon>
        <taxon>Streptococcus</taxon>
    </lineage>
</organism>
<gene>
    <name evidence="1" type="primary">recO</name>
    <name type="ordered locus">MGAS9429_Spy0019</name>
</gene>
<comment type="function">
    <text evidence="1">Involved in DNA repair and RecF pathway recombination.</text>
</comment>
<comment type="similarity">
    <text evidence="1">Belongs to the RecO family.</text>
</comment>
<name>RECO_STRPC</name>
<protein>
    <recommendedName>
        <fullName evidence="1">DNA repair protein RecO</fullName>
    </recommendedName>
    <alternativeName>
        <fullName evidence="1">Recombination protein O</fullName>
    </alternativeName>
</protein>
<feature type="chain" id="PRO_0000264848" description="DNA repair protein RecO">
    <location>
        <begin position="1"/>
        <end position="251"/>
    </location>
</feature>
<sequence length="251" mass="29517">MQLTESLGIVLFNRNYREDDKLVKIFTEVAGKQMFFVKHISRSKMSSIIQPLTIADFIFKLNDTGLSYVVDYSNVNTYRYINNDIFRLAYASYVLALADAAIADNESDSHLFTFLKKTLDLMEEGLDYEILTNIFEIQILDRFGISLNFHECAICHRTDLPLDFSHRFSAVLCSEHYYKDNRRNHLDPNVIYLLSRFQKITFDDLRTISLNKDIKKKLRQFIDELYHDYVGIKLKSKTFIDNLVKWGDIMK</sequence>